<sequence>MKIGSPSSPILSVVSSSGSLDPKISGSLGSRILPATQRSSPSENLLLHRKMSSNSLRHVESMSQLPSGAGKISQLNAVVLGESLASEENDLVFPSKEFSGQALVSSPQQYMEMHKRSMDDPAAFWSDIASEFYWKQKWGDQVFSENLDVRKGPISIEWFKGGITNICYNCLDKNVEAGLGDKTAIHWEGNELGVDASLTYSELLQRVCQLANYLKDNGVKKGDAVVIYLPMLMELPIAMLACARIGAVHSVVFAGFSADSLAQRIVDCKPNVILTCNAVKRGPKTINLKAIVDAALDQSSKDGVSVGICLTYDNSLATTRENTKWQNGRDVWWQDVISQYPTSCEVEWVDAEDPLFLLYTSGSTGKPKGVLHTTGGYMIYTATTFKYAFDYKSTDVYWCTADCGWITGHSYVTYGPMLNGATVVVFEGAPNYPDPGRCWDIVDKYKVSIFYTAPTLVRSLMRDDDKFVTRHSRKSLRVLGSVGEPINPSAWRWFFNVVGDSRCPISDTWWQTETGGFMITPLPGAWPQKPGSATFPFFGVQPVIVDEKGNEIEGECSGYLCVKGSWPGAFRTLFGDHERYETTYFKPFAGYYFSGDGCSRDKDGYYWLTGRVDDVINVSGHRIGTAEVESALVLHPQCAEAAVVGIEHEVKGQGIYAFVTLLEGVPYSEELRKSLVLMVRNQIGAFAAPDRIHWAPGLPKTRSGKIMRRILRKIASRQLEELGDTSTLADPSVVDQLIALADV</sequence>
<keyword id="KW-0025">Alternative splicing</keyword>
<keyword id="KW-0067">ATP-binding</keyword>
<keyword id="KW-0150">Chloroplast</keyword>
<keyword id="KW-0276">Fatty acid metabolism</keyword>
<keyword id="KW-0330">Glyoxysome</keyword>
<keyword id="KW-0436">Ligase</keyword>
<keyword id="KW-0443">Lipid metabolism</keyword>
<keyword id="KW-0547">Nucleotide-binding</keyword>
<keyword id="KW-0576">Peroxisome</keyword>
<keyword id="KW-0934">Plastid</keyword>
<keyword id="KW-1185">Reference proteome</keyword>
<keyword id="KW-0809">Transit peptide</keyword>
<gene>
    <name type="primary">ACS</name>
    <name type="ordered locus">At5g36880</name>
    <name type="ORF">F5H8.15</name>
</gene>
<protein>
    <recommendedName>
        <fullName>Acetyl-coenzyme A synthetase, chloroplastic/glyoxysomal</fullName>
        <ecNumber>6.2.1.1</ecNumber>
    </recommendedName>
    <alternativeName>
        <fullName>Acetate--CoA ligase</fullName>
    </alternativeName>
    <alternativeName>
        <fullName>Acetyl-CoA synthetase</fullName>
    </alternativeName>
</protein>
<dbReference type="EC" id="6.2.1.1"/>
<dbReference type="EMBL" id="AF036618">
    <property type="protein sequence ID" value="AAB92552.1"/>
    <property type="molecule type" value="mRNA"/>
</dbReference>
<dbReference type="EMBL" id="AB025605">
    <property type="protein sequence ID" value="BAA98066.1"/>
    <property type="molecule type" value="Genomic_DNA"/>
</dbReference>
<dbReference type="EMBL" id="CP002688">
    <property type="protein sequence ID" value="AED94120.1"/>
    <property type="molecule type" value="Genomic_DNA"/>
</dbReference>
<dbReference type="EMBL" id="CP002688">
    <property type="protein sequence ID" value="AED94121.1"/>
    <property type="molecule type" value="Genomic_DNA"/>
</dbReference>
<dbReference type="EMBL" id="CP002688">
    <property type="protein sequence ID" value="ANM69414.1"/>
    <property type="molecule type" value="Genomic_DNA"/>
</dbReference>
<dbReference type="EMBL" id="CP002688">
    <property type="protein sequence ID" value="ANM69415.1"/>
    <property type="molecule type" value="Genomic_DNA"/>
</dbReference>
<dbReference type="EMBL" id="CP002688">
    <property type="protein sequence ID" value="ANM69417.1"/>
    <property type="molecule type" value="Genomic_DNA"/>
</dbReference>
<dbReference type="EMBL" id="AY045880">
    <property type="protein sequence ID" value="AAK76554.1"/>
    <property type="molecule type" value="mRNA"/>
</dbReference>
<dbReference type="EMBL" id="BT002371">
    <property type="protein sequence ID" value="AAN86204.1"/>
    <property type="molecule type" value="mRNA"/>
</dbReference>
<dbReference type="EMBL" id="AK317115">
    <property type="protein sequence ID" value="BAH19803.1"/>
    <property type="molecule type" value="mRNA"/>
</dbReference>
<dbReference type="RefSeq" id="NP_001031974.2">
    <molecule id="B9DGD6-1"/>
    <property type="nucleotide sequence ID" value="NM_001036897.3"/>
</dbReference>
<dbReference type="RefSeq" id="NP_001331094.1">
    <molecule id="B9DGD6-2"/>
    <property type="nucleotide sequence ID" value="NM_001344154.1"/>
</dbReference>
<dbReference type="RefSeq" id="NP_001331095.1">
    <molecule id="B9DGD6-2"/>
    <property type="nucleotide sequence ID" value="NM_001344156.1"/>
</dbReference>
<dbReference type="RefSeq" id="NP_001331097.1">
    <molecule id="B9DGD6-2"/>
    <property type="nucleotide sequence ID" value="NM_001344157.1"/>
</dbReference>
<dbReference type="RefSeq" id="NP_198504.1">
    <molecule id="B9DGD6-2"/>
    <property type="nucleotide sequence ID" value="NM_123046.4"/>
</dbReference>
<dbReference type="SMR" id="B9DGD6"/>
<dbReference type="BioGRID" id="18906">
    <property type="interactions" value="4"/>
</dbReference>
<dbReference type="FunCoup" id="B9DGD6">
    <property type="interactions" value="3143"/>
</dbReference>
<dbReference type="IntAct" id="B9DGD6">
    <property type="interactions" value="1"/>
</dbReference>
<dbReference type="STRING" id="3702.B9DGD6"/>
<dbReference type="iPTMnet" id="B9DGD6"/>
<dbReference type="MetOSite" id="B9DGD6"/>
<dbReference type="PaxDb" id="3702-AT5G36880.2"/>
<dbReference type="ProteomicsDB" id="244386">
    <molecule id="B9DGD6-1"/>
</dbReference>
<dbReference type="EnsemblPlants" id="AT5G36880.1">
    <molecule id="B9DGD6-2"/>
    <property type="protein sequence ID" value="AT5G36880.1"/>
    <property type="gene ID" value="AT5G36880"/>
</dbReference>
<dbReference type="EnsemblPlants" id="AT5G36880.2">
    <molecule id="B9DGD6-1"/>
    <property type="protein sequence ID" value="AT5G36880.2"/>
    <property type="gene ID" value="AT5G36880"/>
</dbReference>
<dbReference type="EnsemblPlants" id="AT5G36880.3">
    <molecule id="B9DGD6-2"/>
    <property type="protein sequence ID" value="AT5G36880.3"/>
    <property type="gene ID" value="AT5G36880"/>
</dbReference>
<dbReference type="EnsemblPlants" id="AT5G36880.5">
    <molecule id="B9DGD6-2"/>
    <property type="protein sequence ID" value="AT5G36880.5"/>
    <property type="gene ID" value="AT5G36880"/>
</dbReference>
<dbReference type="EnsemblPlants" id="AT5G36880.6">
    <molecule id="B9DGD6-2"/>
    <property type="protein sequence ID" value="AT5G36880.6"/>
    <property type="gene ID" value="AT5G36880"/>
</dbReference>
<dbReference type="GeneID" id="833655"/>
<dbReference type="Gramene" id="AT5G36880.1">
    <molecule id="B9DGD6-2"/>
    <property type="protein sequence ID" value="AT5G36880.1"/>
    <property type="gene ID" value="AT5G36880"/>
</dbReference>
<dbReference type="Gramene" id="AT5G36880.2">
    <molecule id="B9DGD6-1"/>
    <property type="protein sequence ID" value="AT5G36880.2"/>
    <property type="gene ID" value="AT5G36880"/>
</dbReference>
<dbReference type="Gramene" id="AT5G36880.3">
    <molecule id="B9DGD6-2"/>
    <property type="protein sequence ID" value="AT5G36880.3"/>
    <property type="gene ID" value="AT5G36880"/>
</dbReference>
<dbReference type="Gramene" id="AT5G36880.5">
    <molecule id="B9DGD6-2"/>
    <property type="protein sequence ID" value="AT5G36880.5"/>
    <property type="gene ID" value="AT5G36880"/>
</dbReference>
<dbReference type="Gramene" id="AT5G36880.6">
    <molecule id="B9DGD6-2"/>
    <property type="protein sequence ID" value="AT5G36880.6"/>
    <property type="gene ID" value="AT5G36880"/>
</dbReference>
<dbReference type="KEGG" id="ath:AT5G36880"/>
<dbReference type="Araport" id="AT5G36880"/>
<dbReference type="TAIR" id="AT5G36880">
    <property type="gene designation" value="ACS"/>
</dbReference>
<dbReference type="eggNOG" id="KOG1175">
    <property type="taxonomic scope" value="Eukaryota"/>
</dbReference>
<dbReference type="InParanoid" id="B9DGD6"/>
<dbReference type="OMA" id="INVSYNC"/>
<dbReference type="OrthoDB" id="1706066at2759"/>
<dbReference type="PhylomeDB" id="B9DGD6"/>
<dbReference type="BioCyc" id="ARA:AT5G36880-MONOMER"/>
<dbReference type="BRENDA" id="6.2.1.1">
    <property type="organism ID" value="399"/>
</dbReference>
<dbReference type="PRO" id="PR:B9DGD6"/>
<dbReference type="Proteomes" id="UP000006548">
    <property type="component" value="Chromosome 5"/>
</dbReference>
<dbReference type="ExpressionAtlas" id="B9DGD6">
    <property type="expression patterns" value="baseline and differential"/>
</dbReference>
<dbReference type="GO" id="GO:0009507">
    <property type="term" value="C:chloroplast"/>
    <property type="evidence" value="ECO:0007005"/>
    <property type="project" value="TAIR"/>
</dbReference>
<dbReference type="GO" id="GO:0009570">
    <property type="term" value="C:chloroplast stroma"/>
    <property type="evidence" value="ECO:0007005"/>
    <property type="project" value="TAIR"/>
</dbReference>
<dbReference type="GO" id="GO:0005829">
    <property type="term" value="C:cytosol"/>
    <property type="evidence" value="ECO:0007005"/>
    <property type="project" value="TAIR"/>
</dbReference>
<dbReference type="GO" id="GO:0009514">
    <property type="term" value="C:glyoxysome"/>
    <property type="evidence" value="ECO:0007669"/>
    <property type="project" value="UniProtKB-SubCell"/>
</dbReference>
<dbReference type="GO" id="GO:0009536">
    <property type="term" value="C:plastid"/>
    <property type="evidence" value="ECO:0000314"/>
    <property type="project" value="TAIR"/>
</dbReference>
<dbReference type="GO" id="GO:0003987">
    <property type="term" value="F:acetate-CoA ligase activity"/>
    <property type="evidence" value="ECO:0000315"/>
    <property type="project" value="TAIR"/>
</dbReference>
<dbReference type="GO" id="GO:0016208">
    <property type="term" value="F:AMP binding"/>
    <property type="evidence" value="ECO:0007669"/>
    <property type="project" value="InterPro"/>
</dbReference>
<dbReference type="GO" id="GO:0005524">
    <property type="term" value="F:ATP binding"/>
    <property type="evidence" value="ECO:0007669"/>
    <property type="project" value="UniProtKB-KW"/>
</dbReference>
<dbReference type="GO" id="GO:0006083">
    <property type="term" value="P:acetate metabolic process"/>
    <property type="evidence" value="ECO:0000315"/>
    <property type="project" value="TAIR"/>
</dbReference>
<dbReference type="GO" id="GO:0019427">
    <property type="term" value="P:acetyl-CoA biosynthetic process from acetate"/>
    <property type="evidence" value="ECO:0007669"/>
    <property type="project" value="InterPro"/>
</dbReference>
<dbReference type="GO" id="GO:0006631">
    <property type="term" value="P:fatty acid metabolic process"/>
    <property type="evidence" value="ECO:0007669"/>
    <property type="project" value="UniProtKB-KW"/>
</dbReference>
<dbReference type="CDD" id="cd05966">
    <property type="entry name" value="ACS"/>
    <property type="match status" value="1"/>
</dbReference>
<dbReference type="FunFam" id="3.30.300.30:FF:000004">
    <property type="entry name" value="Acetyl-coenzyme A synthetase"/>
    <property type="match status" value="1"/>
</dbReference>
<dbReference type="FunFam" id="3.40.50.12780:FF:000001">
    <property type="entry name" value="Acetyl-coenzyme A synthetase"/>
    <property type="match status" value="1"/>
</dbReference>
<dbReference type="Gene3D" id="3.30.300.30">
    <property type="match status" value="1"/>
</dbReference>
<dbReference type="Gene3D" id="3.40.50.12780">
    <property type="entry name" value="N-terminal domain of ligase-like"/>
    <property type="match status" value="1"/>
</dbReference>
<dbReference type="InterPro" id="IPR011904">
    <property type="entry name" value="Ac_CoA_lig"/>
</dbReference>
<dbReference type="InterPro" id="IPR032387">
    <property type="entry name" value="ACAS_N"/>
</dbReference>
<dbReference type="InterPro" id="IPR025110">
    <property type="entry name" value="AMP-bd_C"/>
</dbReference>
<dbReference type="InterPro" id="IPR045851">
    <property type="entry name" value="AMP-bd_C_sf"/>
</dbReference>
<dbReference type="InterPro" id="IPR020845">
    <property type="entry name" value="AMP-binding_CS"/>
</dbReference>
<dbReference type="InterPro" id="IPR000873">
    <property type="entry name" value="AMP-dep_synth/lig_dom"/>
</dbReference>
<dbReference type="InterPro" id="IPR042099">
    <property type="entry name" value="ANL_N_sf"/>
</dbReference>
<dbReference type="NCBIfam" id="TIGR02188">
    <property type="entry name" value="Ac_CoA_lig_AcsA"/>
    <property type="match status" value="1"/>
</dbReference>
<dbReference type="NCBIfam" id="NF001208">
    <property type="entry name" value="PRK00174.1"/>
    <property type="match status" value="1"/>
</dbReference>
<dbReference type="PANTHER" id="PTHR24095">
    <property type="entry name" value="ACETYL-COENZYME A SYNTHETASE"/>
    <property type="match status" value="1"/>
</dbReference>
<dbReference type="PANTHER" id="PTHR24095:SF14">
    <property type="entry name" value="ACETYL-COENZYME A SYNTHETASE 1"/>
    <property type="match status" value="1"/>
</dbReference>
<dbReference type="Pfam" id="PF16177">
    <property type="entry name" value="ACAS_N"/>
    <property type="match status" value="1"/>
</dbReference>
<dbReference type="Pfam" id="PF00501">
    <property type="entry name" value="AMP-binding"/>
    <property type="match status" value="1"/>
</dbReference>
<dbReference type="Pfam" id="PF13193">
    <property type="entry name" value="AMP-binding_C"/>
    <property type="match status" value="1"/>
</dbReference>
<dbReference type="SUPFAM" id="SSF56801">
    <property type="entry name" value="Acetyl-CoA synthetase-like"/>
    <property type="match status" value="1"/>
</dbReference>
<dbReference type="PROSITE" id="PS00455">
    <property type="entry name" value="AMP_BINDING"/>
    <property type="match status" value="1"/>
</dbReference>
<organism>
    <name type="scientific">Arabidopsis thaliana</name>
    <name type="common">Mouse-ear cress</name>
    <dbReference type="NCBI Taxonomy" id="3702"/>
    <lineage>
        <taxon>Eukaryota</taxon>
        <taxon>Viridiplantae</taxon>
        <taxon>Streptophyta</taxon>
        <taxon>Embryophyta</taxon>
        <taxon>Tracheophyta</taxon>
        <taxon>Spermatophyta</taxon>
        <taxon>Magnoliopsida</taxon>
        <taxon>eudicotyledons</taxon>
        <taxon>Gunneridae</taxon>
        <taxon>Pentapetalae</taxon>
        <taxon>rosids</taxon>
        <taxon>malvids</taxon>
        <taxon>Brassicales</taxon>
        <taxon>Brassicaceae</taxon>
        <taxon>Camelineae</taxon>
        <taxon>Arabidopsis</taxon>
    </lineage>
</organism>
<comment type="function">
    <text evidence="3 4">Catalyzes the production of acetyl-CoA, an activated form of acetate that can be used for lipid synthesis or for energy generation. May play a limited role in the biosynthesis of lipids.</text>
</comment>
<comment type="catalytic activity">
    <reaction evidence="3">
        <text>acetate + ATP + CoA = acetyl-CoA + AMP + diphosphate</text>
        <dbReference type="Rhea" id="RHEA:23176"/>
        <dbReference type="ChEBI" id="CHEBI:30089"/>
        <dbReference type="ChEBI" id="CHEBI:30616"/>
        <dbReference type="ChEBI" id="CHEBI:33019"/>
        <dbReference type="ChEBI" id="CHEBI:57287"/>
        <dbReference type="ChEBI" id="CHEBI:57288"/>
        <dbReference type="ChEBI" id="CHEBI:456215"/>
        <dbReference type="EC" id="6.2.1.1"/>
    </reaction>
</comment>
<comment type="subcellular location">
    <subcellularLocation>
        <location>Plastid</location>
        <location>Chloroplast</location>
    </subcellularLocation>
    <subcellularLocation>
        <location>Glyoxysome</location>
    </subcellularLocation>
</comment>
<comment type="alternative products">
    <event type="alternative splicing"/>
    <isoform>
        <id>B9DGD6-1</id>
        <name>1</name>
        <sequence type="displayed"/>
    </isoform>
    <isoform>
        <id>B9DGD6-2</id>
        <name>2</name>
        <sequence type="described" ref="VSP_042326"/>
    </isoform>
</comment>
<comment type="tissue specificity">
    <text evidence="3">Expressed in leaves, flower buds and young flowers.</text>
</comment>
<comment type="developmental stage">
    <text evidence="3">In the forming silique, expressed in the funiculus and ovule from 1 to 3 day after flowering (DAF). At 3 DAF, expressed in the globular embryo, but expression decreases at 5 DAF and almost disappears at 7 DAF in the embryo. By 1 d after imbibition, expressed in the tip of seed radicle and then in the root tip up to 4 d after imbibition.</text>
</comment>
<comment type="similarity">
    <text evidence="7">Belongs to the ATP-dependent AMP-binding enzyme family.</text>
</comment>
<feature type="transit peptide" description="Chloroplast" evidence="2">
    <location>
        <begin position="1"/>
        <end position="84"/>
    </location>
</feature>
<feature type="chain" id="PRO_0000415733" description="Acetyl-coenzyme A synthetase, chloroplastic/glyoxysomal">
    <location>
        <begin position="85"/>
        <end position="743"/>
    </location>
</feature>
<feature type="active site" evidence="1">
    <location>
        <position position="613"/>
    </location>
</feature>
<feature type="splice variant" id="VSP_042326" description="In isoform 2." evidence="5 6">
    <location>
        <begin position="1"/>
        <end position="50"/>
    </location>
</feature>
<feature type="sequence conflict" description="In Ref. 1; AAB92552." evidence="7" ref="1">
    <original>F</original>
    <variation>L</variation>
    <location>
        <position position="426"/>
    </location>
</feature>
<feature type="sequence conflict" description="In Ref. 1; AAB92552." evidence="7" ref="1">
    <original>W</original>
    <variation>R</variation>
    <location>
        <position position="439"/>
    </location>
</feature>
<evidence type="ECO:0000250" key="1"/>
<evidence type="ECO:0000255" key="2"/>
<evidence type="ECO:0000269" key="3">
    <source>
    </source>
</evidence>
<evidence type="ECO:0000269" key="4">
    <source>
    </source>
</evidence>
<evidence type="ECO:0000303" key="5">
    <source>
    </source>
</evidence>
<evidence type="ECO:0000303" key="6">
    <source>
    </source>
</evidence>
<evidence type="ECO:0000305" key="7"/>
<name>ACS_ARATH</name>
<proteinExistence type="evidence at protein level"/>
<accession>B9DGD6</accession>
<accession>O49063</accession>
<accession>Q9LTG4</accession>
<reference key="1">
    <citation type="journal article" date="2000" name="Plant Physiol.">
        <title>The role of pyruvate dehydrogenase and acetyl-coenzyme A synthetase in fatty acid synthesis in developing Arabidopsis seeds.</title>
        <authorList>
            <person name="Ke J."/>
            <person name="Behal R.H."/>
            <person name="Back S.L."/>
            <person name="Nikolau B.J."/>
            <person name="Wurtele E.S."/>
            <person name="Oliver D.J."/>
        </authorList>
    </citation>
    <scope>NUCLEOTIDE SEQUENCE [MRNA] (ISOFORM 2)</scope>
    <scope>FUNCTION</scope>
    <scope>CATALYTIC ACTIVITY</scope>
    <scope>SUBCELLULAR LOCATION</scope>
    <scope>TISSUE SPECIFICITY</scope>
    <scope>DEVELOPMENTAL STAGE</scope>
</reference>
<reference key="2">
    <citation type="submission" date="2002-12" db="EMBL/GenBank/DDBJ databases">
        <title>Structural analysis of Arabidopsis thaliana chromosome 5. XI.</title>
        <authorList>
            <person name="Kaneko T."/>
            <person name="Katoh T."/>
            <person name="Asamizu E."/>
            <person name="Sato S."/>
            <person name="Nakamura Y."/>
            <person name="Kotani H."/>
            <person name="Tabata S."/>
        </authorList>
    </citation>
    <scope>NUCLEOTIDE SEQUENCE [LARGE SCALE GENOMIC DNA]</scope>
    <source>
        <strain>cv. Columbia</strain>
    </source>
</reference>
<reference key="3">
    <citation type="journal article" date="2017" name="Plant J.">
        <title>Araport11: a complete reannotation of the Arabidopsis thaliana reference genome.</title>
        <authorList>
            <person name="Cheng C.Y."/>
            <person name="Krishnakumar V."/>
            <person name="Chan A.P."/>
            <person name="Thibaud-Nissen F."/>
            <person name="Schobel S."/>
            <person name="Town C.D."/>
        </authorList>
    </citation>
    <scope>GENOME REANNOTATION</scope>
    <source>
        <strain>cv. Columbia</strain>
    </source>
</reference>
<reference key="4">
    <citation type="journal article" date="2003" name="Science">
        <title>Empirical analysis of transcriptional activity in the Arabidopsis genome.</title>
        <authorList>
            <person name="Yamada K."/>
            <person name="Lim J."/>
            <person name="Dale J.M."/>
            <person name="Chen H."/>
            <person name="Shinn P."/>
            <person name="Palm C.J."/>
            <person name="Southwick A.M."/>
            <person name="Wu H.C."/>
            <person name="Kim C.J."/>
            <person name="Nguyen M."/>
            <person name="Pham P.K."/>
            <person name="Cheuk R.F."/>
            <person name="Karlin-Newmann G."/>
            <person name="Liu S.X."/>
            <person name="Lam B."/>
            <person name="Sakano H."/>
            <person name="Wu T."/>
            <person name="Yu G."/>
            <person name="Miranda M."/>
            <person name="Quach H.L."/>
            <person name="Tripp M."/>
            <person name="Chang C.H."/>
            <person name="Lee J.M."/>
            <person name="Toriumi M.J."/>
            <person name="Chan M.M."/>
            <person name="Tang C.C."/>
            <person name="Onodera C.S."/>
            <person name="Deng J.M."/>
            <person name="Akiyama K."/>
            <person name="Ansari Y."/>
            <person name="Arakawa T."/>
            <person name="Banh J."/>
            <person name="Banno F."/>
            <person name="Bowser L."/>
            <person name="Brooks S.Y."/>
            <person name="Carninci P."/>
            <person name="Chao Q."/>
            <person name="Choy N."/>
            <person name="Enju A."/>
            <person name="Goldsmith A.D."/>
            <person name="Gurjal M."/>
            <person name="Hansen N.F."/>
            <person name="Hayashizaki Y."/>
            <person name="Johnson-Hopson C."/>
            <person name="Hsuan V.W."/>
            <person name="Iida K."/>
            <person name="Karnes M."/>
            <person name="Khan S."/>
            <person name="Koesema E."/>
            <person name="Ishida J."/>
            <person name="Jiang P.X."/>
            <person name="Jones T."/>
            <person name="Kawai J."/>
            <person name="Kamiya A."/>
            <person name="Meyers C."/>
            <person name="Nakajima M."/>
            <person name="Narusaka M."/>
            <person name="Seki M."/>
            <person name="Sakurai T."/>
            <person name="Satou M."/>
            <person name="Tamse R."/>
            <person name="Vaysberg M."/>
            <person name="Wallender E.K."/>
            <person name="Wong C."/>
            <person name="Yamamura Y."/>
            <person name="Yuan S."/>
            <person name="Shinozaki K."/>
            <person name="Davis R.W."/>
            <person name="Theologis A."/>
            <person name="Ecker J.R."/>
        </authorList>
    </citation>
    <scope>NUCLEOTIDE SEQUENCE [LARGE SCALE MRNA] (ISOFORM 2)</scope>
    <source>
        <strain>cv. Columbia</strain>
    </source>
</reference>
<reference key="5">
    <citation type="journal article" date="2009" name="DNA Res.">
        <title>Analysis of multiple occurrences of alternative splicing events in Arabidopsis thaliana using novel sequenced full-length cDNAs.</title>
        <authorList>
            <person name="Iida K."/>
            <person name="Fukami-Kobayashi K."/>
            <person name="Toyoda A."/>
            <person name="Sakaki Y."/>
            <person name="Kobayashi M."/>
            <person name="Seki M."/>
            <person name="Shinozaki K."/>
        </authorList>
    </citation>
    <scope>NUCLEOTIDE SEQUENCE [LARGE SCALE MRNA] (ISOFORM 1)</scope>
    <source>
        <strain>cv. Columbia</strain>
    </source>
</reference>
<reference key="6">
    <citation type="journal article" date="2002" name="Arch. Biochem. Biophys.">
        <title>Role of acetyl-coenzyme A synthetase in leaves of Arabidopsis thaliana.</title>
        <authorList>
            <person name="Behal R.H."/>
            <person name="Lin M."/>
            <person name="Back S."/>
            <person name="Oliver D.J."/>
        </authorList>
    </citation>
    <scope>FUNCTION</scope>
</reference>
<reference key="7">
    <citation type="journal article" date="2003" name="Plant Cell Physiol.">
        <title>Novel glyoxysomal protein kinase, GPK1, identified by proteomic analysis of glyoxysomes in etiolated cotyledons of Arabidopsis thaliana.</title>
        <authorList>
            <person name="Fukao Y."/>
            <person name="Hayashi M."/>
            <person name="Hara-Nishimura I."/>
            <person name="Nishimura M."/>
        </authorList>
    </citation>
    <scope>SUBCELLULAR LOCATION</scope>
</reference>
<reference key="8">
    <citation type="journal article" date="2003" name="Plant Physiol.">
        <title>Arabidopsis contains a large superfamily of acyl-activating enzymes. Phylogenetic and biochemical analysis reveals a new class of acyl-coenzyme a synthetases.</title>
        <authorList>
            <person name="Shockey J.M."/>
            <person name="Fulda M.S."/>
            <person name="Browse J."/>
        </authorList>
    </citation>
    <scope>GENE FAMILY</scope>
</reference>
<reference key="9">
    <citation type="journal article" date="2008" name="J. Proteome Res.">
        <title>Site-specific phosphorylation profiling of Arabidopsis proteins by mass spectrometry and peptide chip analysis.</title>
        <authorList>
            <person name="de la Fuente van Bentem S."/>
            <person name="Anrather D."/>
            <person name="Dohnal I."/>
            <person name="Roitinger E."/>
            <person name="Csaszar E."/>
            <person name="Joore J."/>
            <person name="Buijnink J."/>
            <person name="Carreri A."/>
            <person name="Forzani C."/>
            <person name="Lorkovic Z.J."/>
            <person name="Barta A."/>
            <person name="Lecourieux D."/>
            <person name="Verhounig A."/>
            <person name="Jonak C."/>
            <person name="Hirt H."/>
        </authorList>
    </citation>
    <scope>IDENTIFICATION BY MASS SPECTROMETRY [LARGE SCALE ANALYSIS]</scope>
    <source>
        <tissue>Root</tissue>
    </source>
</reference>
<reference key="10">
    <citation type="journal article" date="2009" name="J. Proteomics">
        <title>Phosphoproteomic analysis of nuclei-enriched fractions from Arabidopsis thaliana.</title>
        <authorList>
            <person name="Jones A.M.E."/>
            <person name="MacLean D."/>
            <person name="Studholme D.J."/>
            <person name="Serna-Sanz A."/>
            <person name="Andreasson E."/>
            <person name="Rathjen J.P."/>
            <person name="Peck S.C."/>
        </authorList>
    </citation>
    <scope>IDENTIFICATION BY MASS SPECTROMETRY [LARGE SCALE ANALYSIS]</scope>
    <source>
        <strain>cv. Columbia</strain>
    </source>
</reference>
<reference key="11">
    <citation type="journal article" date="2009" name="Plant Physiol.">
        <title>Large-scale Arabidopsis phosphoproteome profiling reveals novel chloroplast kinase substrates and phosphorylation networks.</title>
        <authorList>
            <person name="Reiland S."/>
            <person name="Messerli G."/>
            <person name="Baerenfaller K."/>
            <person name="Gerrits B."/>
            <person name="Endler A."/>
            <person name="Grossmann J."/>
            <person name="Gruissem W."/>
            <person name="Baginsky S."/>
        </authorList>
    </citation>
    <scope>IDENTIFICATION BY MASS SPECTROMETRY [LARGE SCALE ANALYSIS]</scope>
</reference>